<reference key="1">
    <citation type="journal article" date="1995" name="Science">
        <title>Whole-genome random sequencing and assembly of Haemophilus influenzae Rd.</title>
        <authorList>
            <person name="Fleischmann R.D."/>
            <person name="Adams M.D."/>
            <person name="White O."/>
            <person name="Clayton R.A."/>
            <person name="Kirkness E.F."/>
            <person name="Kerlavage A.R."/>
            <person name="Bult C.J."/>
            <person name="Tomb J.-F."/>
            <person name="Dougherty B.A."/>
            <person name="Merrick J.M."/>
            <person name="McKenney K."/>
            <person name="Sutton G.G."/>
            <person name="FitzHugh W."/>
            <person name="Fields C.A."/>
            <person name="Gocayne J.D."/>
            <person name="Scott J.D."/>
            <person name="Shirley R."/>
            <person name="Liu L.-I."/>
            <person name="Glodek A."/>
            <person name="Kelley J.M."/>
            <person name="Weidman J.F."/>
            <person name="Phillips C.A."/>
            <person name="Spriggs T."/>
            <person name="Hedblom E."/>
            <person name="Cotton M.D."/>
            <person name="Utterback T.R."/>
            <person name="Hanna M.C."/>
            <person name="Nguyen D.T."/>
            <person name="Saudek D.M."/>
            <person name="Brandon R.C."/>
            <person name="Fine L.D."/>
            <person name="Fritchman J.L."/>
            <person name="Fuhrmann J.L."/>
            <person name="Geoghagen N.S.M."/>
            <person name="Gnehm C.L."/>
            <person name="McDonald L.A."/>
            <person name="Small K.V."/>
            <person name="Fraser C.M."/>
            <person name="Smith H.O."/>
            <person name="Venter J.C."/>
        </authorList>
    </citation>
    <scope>NUCLEOTIDE SEQUENCE [LARGE SCALE GENOMIC DNA]</scope>
    <source>
        <strain>ATCC 51907 / DSM 11121 / KW20 / Rd</strain>
    </source>
</reference>
<reference key="2">
    <citation type="journal article" date="2016" name="Proc. Natl. Acad. Sci. U.S.A.">
        <title>Assignment of function to a domain of unknown function: DUF1537 is a new kinase family in catabolic pathways for acid sugars.</title>
        <authorList>
            <person name="Zhang X."/>
            <person name="Carter M.S."/>
            <person name="Vetting M.W."/>
            <person name="San Francisco B."/>
            <person name="Zhao S."/>
            <person name="Al-Obaidi N.F."/>
            <person name="Solbiati J.O."/>
            <person name="Thiaville J.J."/>
            <person name="de Crecy-Lagard V."/>
            <person name="Jacobson M.P."/>
            <person name="Almo S.C."/>
            <person name="Gerlt J.A."/>
        </authorList>
    </citation>
    <scope>FUNCTION</scope>
    <scope>CATALYTIC ACTIVITY</scope>
    <scope>BIOPHYSICOCHEMICAL PROPERTIES</scope>
    <source>
        <strain>ATCC 51907 / DSM 11121 / KW20 / Rd</strain>
    </source>
</reference>
<feature type="chain" id="PRO_0000077991" description="D-erythronate dehydrogenase">
    <location>
        <begin position="1"/>
        <end position="315"/>
    </location>
</feature>
<feature type="active site" description="Proton acceptor" evidence="1">
    <location>
        <position position="143"/>
    </location>
</feature>
<feature type="binding site" evidence="1">
    <location>
        <position position="119"/>
    </location>
    <ligand>
        <name>NAD(+)</name>
        <dbReference type="ChEBI" id="CHEBI:57540"/>
    </ligand>
</feature>
<feature type="binding site" evidence="1">
    <location>
        <position position="143"/>
    </location>
    <ligand>
        <name>NAD(+)</name>
        <dbReference type="ChEBI" id="CHEBI:57540"/>
    </ligand>
</feature>
<feature type="binding site" evidence="1">
    <location>
        <position position="147"/>
    </location>
    <ligand>
        <name>NAD(+)</name>
        <dbReference type="ChEBI" id="CHEBI:57540"/>
    </ligand>
</feature>
<organism>
    <name type="scientific">Haemophilus influenzae (strain ATCC 51907 / DSM 11121 / KW20 / Rd)</name>
    <dbReference type="NCBI Taxonomy" id="71421"/>
    <lineage>
        <taxon>Bacteria</taxon>
        <taxon>Pseudomonadati</taxon>
        <taxon>Pseudomonadota</taxon>
        <taxon>Gammaproteobacteria</taxon>
        <taxon>Pasteurellales</taxon>
        <taxon>Pasteurellaceae</taxon>
        <taxon>Haemophilus</taxon>
    </lineage>
</organism>
<protein>
    <recommendedName>
        <fullName evidence="3">D-erythronate dehydrogenase</fullName>
        <ecNumber evidence="2">1.1.1.410</ecNumber>
    </recommendedName>
</protein>
<accession>P44094</accession>
<proteinExistence type="evidence at protein level"/>
<dbReference type="EC" id="1.1.1.410" evidence="2"/>
<dbReference type="EMBL" id="L42023">
    <property type="protein sequence ID" value="AAC22675.1"/>
    <property type="molecule type" value="Genomic_DNA"/>
</dbReference>
<dbReference type="PIR" id="D64018">
    <property type="entry name" value="D64018"/>
</dbReference>
<dbReference type="RefSeq" id="NP_439175.1">
    <property type="nucleotide sequence ID" value="NC_000907.1"/>
</dbReference>
<dbReference type="SMR" id="P44094"/>
<dbReference type="STRING" id="71421.HI_1014"/>
<dbReference type="EnsemblBacteria" id="AAC22675">
    <property type="protein sequence ID" value="AAC22675"/>
    <property type="gene ID" value="HI_1014"/>
</dbReference>
<dbReference type="KEGG" id="hin:HI_1014"/>
<dbReference type="PATRIC" id="fig|71421.8.peg.1058"/>
<dbReference type="eggNOG" id="COG0451">
    <property type="taxonomic scope" value="Bacteria"/>
</dbReference>
<dbReference type="HOGENOM" id="CLU_007383_19_0_6"/>
<dbReference type="OrthoDB" id="9801056at2"/>
<dbReference type="PhylomeDB" id="P44094"/>
<dbReference type="BioCyc" id="HINF71421:G1GJ1-1054-MONOMER"/>
<dbReference type="BioCyc" id="MetaCyc:MONOMER-20182"/>
<dbReference type="Proteomes" id="UP000000579">
    <property type="component" value="Chromosome"/>
</dbReference>
<dbReference type="GO" id="GO:0016491">
    <property type="term" value="F:oxidoreductase activity"/>
    <property type="evidence" value="ECO:0007669"/>
    <property type="project" value="UniProtKB-KW"/>
</dbReference>
<dbReference type="CDD" id="cd05238">
    <property type="entry name" value="Gne_like_SDR_e"/>
    <property type="match status" value="1"/>
</dbReference>
<dbReference type="Gene3D" id="3.40.50.720">
    <property type="entry name" value="NAD(P)-binding Rossmann-like Domain"/>
    <property type="match status" value="1"/>
</dbReference>
<dbReference type="Gene3D" id="3.90.25.10">
    <property type="entry name" value="UDP-galactose 4-epimerase, domain 1"/>
    <property type="match status" value="1"/>
</dbReference>
<dbReference type="InterPro" id="IPR050005">
    <property type="entry name" value="DenD"/>
</dbReference>
<dbReference type="InterPro" id="IPR001509">
    <property type="entry name" value="Epimerase_deHydtase"/>
</dbReference>
<dbReference type="InterPro" id="IPR036291">
    <property type="entry name" value="NAD(P)-bd_dom_sf"/>
</dbReference>
<dbReference type="NCBIfam" id="NF043036">
    <property type="entry name" value="ErythonDh"/>
    <property type="match status" value="1"/>
</dbReference>
<dbReference type="PANTHER" id="PTHR43103:SF3">
    <property type="entry name" value="ADP-L-GLYCERO-D-MANNO-HEPTOSE-6-EPIMERASE"/>
    <property type="match status" value="1"/>
</dbReference>
<dbReference type="PANTHER" id="PTHR43103">
    <property type="entry name" value="NUCLEOSIDE-DIPHOSPHATE-SUGAR EPIMERASE"/>
    <property type="match status" value="1"/>
</dbReference>
<dbReference type="Pfam" id="PF01370">
    <property type="entry name" value="Epimerase"/>
    <property type="match status" value="1"/>
</dbReference>
<dbReference type="SUPFAM" id="SSF51735">
    <property type="entry name" value="NAD(P)-binding Rossmann-fold domains"/>
    <property type="match status" value="1"/>
</dbReference>
<name>DEND_HAEIN</name>
<gene>
    <name evidence="3" type="primary">denD</name>
    <name type="ordered locus">HI_1014</name>
</gene>
<keyword id="KW-0119">Carbohydrate metabolism</keyword>
<keyword id="KW-0520">NAD</keyword>
<keyword id="KW-0521">NADP</keyword>
<keyword id="KW-0560">Oxidoreductase</keyword>
<keyword id="KW-1185">Reference proteome</keyword>
<comment type="function">
    <text evidence="2">Catalyzes oxidation of D-erythronate to 2-oxo-tetronate. Can use either NAD(+) or NADP(+) as cosubstrate, with a preference for NAD(+).</text>
</comment>
<comment type="catalytic activity">
    <reaction evidence="2">
        <text>D-erythronate + NAD(+) = 2-dehydro-D-erythronate + NADH + H(+)</text>
        <dbReference type="Rhea" id="RHEA:52544"/>
        <dbReference type="ChEBI" id="CHEBI:15378"/>
        <dbReference type="ChEBI" id="CHEBI:57540"/>
        <dbReference type="ChEBI" id="CHEBI:57945"/>
        <dbReference type="ChEBI" id="CHEBI:136591"/>
        <dbReference type="ChEBI" id="CHEBI:136668"/>
        <dbReference type="EC" id="1.1.1.410"/>
    </reaction>
</comment>
<comment type="biophysicochemical properties">
    <kinetics>
        <KM evidence="2">0.23 mM for NAD(+)</KM>
        <KM evidence="2">0.61 mM for NADP(+)</KM>
        <text evidence="2">kcat is 1.9 sec(-1) with NAD(+) as cosubstrate. kcat is 0.88 sec(-1) with NADP(+) as cosubstrate.</text>
    </kinetics>
</comment>
<comment type="similarity">
    <text evidence="4">Belongs to the NAD(P)-dependent epimerase/dehydratase family.</text>
</comment>
<evidence type="ECO:0000250" key="1">
    <source>
        <dbReference type="UniProtKB" id="P09147"/>
    </source>
</evidence>
<evidence type="ECO:0000269" key="2">
    <source>
    </source>
</evidence>
<evidence type="ECO:0000303" key="3">
    <source>
    </source>
</evidence>
<evidence type="ECO:0000305" key="4"/>
<sequence length="315" mass="35145">MKVVITGGQGFLGQRLAKTLLAQNNVHIDDLILIDVVKPIAPNNDPRVRCYEMNLRYPTGLDELITEETDAIFHLAAIVSSHAEQDPDLGYETNFLATRNILEICRKNNPKVRFIFSSSLAIFGGELPETILDSTAFTPQSTYGTQKAMCELLINDYSRKGFVDGIVVRLPTICIRPGKPNKAASSFVSSIMREPLHGEDAVCPVSEELRLWLSSPNTVVANFIHALQLPSLPLRSWHTINLPGFSVTVKQMLSDLTQVKGEAILEHIKFEFDESINNIVASWPSRIDNTQALALGFKVDSNFQNVIQQFIEYDM</sequence>